<comment type="function">
    <text evidence="1">Exhibits a very high intrinsic GTPase hydrolysis rate. Involved in the addition of a carboxymethylaminomethyl (cmnm) group at the wobble position (U34) of certain tRNAs, forming tRNA-cmnm(5)s(2)U34.</text>
</comment>
<comment type="cofactor">
    <cofactor evidence="1">
        <name>K(+)</name>
        <dbReference type="ChEBI" id="CHEBI:29103"/>
    </cofactor>
    <text evidence="1">Binds 1 potassium ion per subunit.</text>
</comment>
<comment type="subunit">
    <text evidence="1">Homodimer. Heterotetramer of two MnmE and two MnmG subunits.</text>
</comment>
<comment type="subcellular location">
    <subcellularLocation>
        <location evidence="1">Cytoplasm</location>
    </subcellularLocation>
</comment>
<comment type="similarity">
    <text evidence="1">Belongs to the TRAFAC class TrmE-Era-EngA-EngB-Septin-like GTPase superfamily. TrmE GTPase family.</text>
</comment>
<protein>
    <recommendedName>
        <fullName evidence="1">tRNA modification GTPase MnmE</fullName>
        <ecNumber evidence="1">3.6.-.-</ecNumber>
    </recommendedName>
</protein>
<accession>B0V5S5</accession>
<keyword id="KW-0963">Cytoplasm</keyword>
<keyword id="KW-0342">GTP-binding</keyword>
<keyword id="KW-0378">Hydrolase</keyword>
<keyword id="KW-0460">Magnesium</keyword>
<keyword id="KW-0479">Metal-binding</keyword>
<keyword id="KW-0547">Nucleotide-binding</keyword>
<keyword id="KW-0630">Potassium</keyword>
<keyword id="KW-0819">tRNA processing</keyword>
<evidence type="ECO:0000255" key="1">
    <source>
        <dbReference type="HAMAP-Rule" id="MF_00379"/>
    </source>
</evidence>
<dbReference type="EC" id="3.6.-.-" evidence="1"/>
<dbReference type="EMBL" id="CU459141">
    <property type="protein sequence ID" value="CAM88648.1"/>
    <property type="molecule type" value="Genomic_DNA"/>
</dbReference>
<dbReference type="SMR" id="B0V5S5"/>
<dbReference type="EnsemblBacteria" id="CAM88648">
    <property type="protein sequence ID" value="CAM88648"/>
    <property type="gene ID" value="ABAYE3899"/>
</dbReference>
<dbReference type="KEGG" id="aby:ABAYE3899"/>
<dbReference type="HOGENOM" id="CLU_019624_4_1_6"/>
<dbReference type="GO" id="GO:0005829">
    <property type="term" value="C:cytosol"/>
    <property type="evidence" value="ECO:0007669"/>
    <property type="project" value="TreeGrafter"/>
</dbReference>
<dbReference type="GO" id="GO:0005525">
    <property type="term" value="F:GTP binding"/>
    <property type="evidence" value="ECO:0007669"/>
    <property type="project" value="UniProtKB-UniRule"/>
</dbReference>
<dbReference type="GO" id="GO:0003924">
    <property type="term" value="F:GTPase activity"/>
    <property type="evidence" value="ECO:0007669"/>
    <property type="project" value="UniProtKB-UniRule"/>
</dbReference>
<dbReference type="GO" id="GO:0046872">
    <property type="term" value="F:metal ion binding"/>
    <property type="evidence" value="ECO:0007669"/>
    <property type="project" value="UniProtKB-KW"/>
</dbReference>
<dbReference type="GO" id="GO:0030488">
    <property type="term" value="P:tRNA methylation"/>
    <property type="evidence" value="ECO:0007669"/>
    <property type="project" value="TreeGrafter"/>
</dbReference>
<dbReference type="GO" id="GO:0002098">
    <property type="term" value="P:tRNA wobble uridine modification"/>
    <property type="evidence" value="ECO:0007669"/>
    <property type="project" value="TreeGrafter"/>
</dbReference>
<dbReference type="CDD" id="cd04164">
    <property type="entry name" value="trmE"/>
    <property type="match status" value="1"/>
</dbReference>
<dbReference type="CDD" id="cd14858">
    <property type="entry name" value="TrmE_N"/>
    <property type="match status" value="1"/>
</dbReference>
<dbReference type="FunFam" id="3.40.50.300:FF:001376">
    <property type="entry name" value="tRNA modification GTPase MnmE"/>
    <property type="match status" value="1"/>
</dbReference>
<dbReference type="Gene3D" id="3.40.50.300">
    <property type="entry name" value="P-loop containing nucleotide triphosphate hydrolases"/>
    <property type="match status" value="1"/>
</dbReference>
<dbReference type="Gene3D" id="3.30.1360.120">
    <property type="entry name" value="Probable tRNA modification gtpase trme, domain 1"/>
    <property type="match status" value="1"/>
</dbReference>
<dbReference type="Gene3D" id="1.20.120.430">
    <property type="entry name" value="tRNA modification GTPase MnmE domain 2"/>
    <property type="match status" value="1"/>
</dbReference>
<dbReference type="HAMAP" id="MF_00379">
    <property type="entry name" value="GTPase_MnmE"/>
    <property type="match status" value="1"/>
</dbReference>
<dbReference type="InterPro" id="IPR031168">
    <property type="entry name" value="G_TrmE"/>
</dbReference>
<dbReference type="InterPro" id="IPR006073">
    <property type="entry name" value="GTP-bd"/>
</dbReference>
<dbReference type="InterPro" id="IPR018948">
    <property type="entry name" value="GTP-bd_TrmE_N"/>
</dbReference>
<dbReference type="InterPro" id="IPR004520">
    <property type="entry name" value="GTPase_MnmE"/>
</dbReference>
<dbReference type="InterPro" id="IPR027368">
    <property type="entry name" value="MnmE_dom2"/>
</dbReference>
<dbReference type="InterPro" id="IPR025867">
    <property type="entry name" value="MnmE_helical"/>
</dbReference>
<dbReference type="InterPro" id="IPR027417">
    <property type="entry name" value="P-loop_NTPase"/>
</dbReference>
<dbReference type="InterPro" id="IPR005225">
    <property type="entry name" value="Small_GTP-bd"/>
</dbReference>
<dbReference type="InterPro" id="IPR027266">
    <property type="entry name" value="TrmE/GcvT_dom1"/>
</dbReference>
<dbReference type="NCBIfam" id="TIGR00450">
    <property type="entry name" value="mnmE_trmE_thdF"/>
    <property type="match status" value="1"/>
</dbReference>
<dbReference type="NCBIfam" id="NF003661">
    <property type="entry name" value="PRK05291.1-3"/>
    <property type="match status" value="1"/>
</dbReference>
<dbReference type="NCBIfam" id="TIGR00231">
    <property type="entry name" value="small_GTP"/>
    <property type="match status" value="1"/>
</dbReference>
<dbReference type="PANTHER" id="PTHR42714">
    <property type="entry name" value="TRNA MODIFICATION GTPASE GTPBP3"/>
    <property type="match status" value="1"/>
</dbReference>
<dbReference type="PANTHER" id="PTHR42714:SF2">
    <property type="entry name" value="TRNA MODIFICATION GTPASE GTPBP3, MITOCHONDRIAL"/>
    <property type="match status" value="1"/>
</dbReference>
<dbReference type="Pfam" id="PF01926">
    <property type="entry name" value="MMR_HSR1"/>
    <property type="match status" value="1"/>
</dbReference>
<dbReference type="Pfam" id="PF12631">
    <property type="entry name" value="MnmE_helical"/>
    <property type="match status" value="1"/>
</dbReference>
<dbReference type="Pfam" id="PF10396">
    <property type="entry name" value="TrmE_N"/>
    <property type="match status" value="1"/>
</dbReference>
<dbReference type="PRINTS" id="PR00326">
    <property type="entry name" value="GTP1OBG"/>
</dbReference>
<dbReference type="SUPFAM" id="SSF52540">
    <property type="entry name" value="P-loop containing nucleoside triphosphate hydrolases"/>
    <property type="match status" value="1"/>
</dbReference>
<dbReference type="SUPFAM" id="SSF116878">
    <property type="entry name" value="TrmE connector domain"/>
    <property type="match status" value="1"/>
</dbReference>
<dbReference type="PROSITE" id="PS51709">
    <property type="entry name" value="G_TRME"/>
    <property type="match status" value="1"/>
</dbReference>
<gene>
    <name evidence="1" type="primary">mnmE</name>
    <name evidence="1" type="synonym">trmE</name>
    <name type="ordered locus">ABAYE3899</name>
</gene>
<reference key="1">
    <citation type="journal article" date="2008" name="PLoS ONE">
        <title>Comparative analysis of Acinetobacters: three genomes for three lifestyles.</title>
        <authorList>
            <person name="Vallenet D."/>
            <person name="Nordmann P."/>
            <person name="Barbe V."/>
            <person name="Poirel L."/>
            <person name="Mangenot S."/>
            <person name="Bataille E."/>
            <person name="Dossat C."/>
            <person name="Gas S."/>
            <person name="Kreimeyer A."/>
            <person name="Lenoble P."/>
            <person name="Oztas S."/>
            <person name="Poulain J."/>
            <person name="Segurens B."/>
            <person name="Robert C."/>
            <person name="Abergel C."/>
            <person name="Claverie J.-M."/>
            <person name="Raoult D."/>
            <person name="Medigue C."/>
            <person name="Weissenbach J."/>
            <person name="Cruveiller S."/>
        </authorList>
    </citation>
    <scope>NUCLEOTIDE SEQUENCE [LARGE SCALE GENOMIC DNA]</scope>
    <source>
        <strain>AYE</strain>
    </source>
</reference>
<proteinExistence type="inferred from homology"/>
<sequence length="454" mass="49142">MNNMHSQTTIAAIATPPGRGGVGVIRLSGPKAYDIAQKLTQKNLPEARMAGFRKFYDTDGSIMDEGIVLCFPNPHSFTGEDVVELQGHGGPVIQNALLGRLFELGAIAAKAGEFSMRAFENGKMDLVQAEAIADLIDATSQAAARSAVRSLQGAFSTKINTVLEKLIHLRLHVEAAIDFPEEEIDFLADGKILALLEDVQQSVHAVQTSARQGQLLREGLQVVIAGKPNAGKSSLLNALAGVERAIVTDIAGTTRDVLHEKISLNGLPITLTDTAGLRETGDIVEKEGIRRAIKEIEQADLLLLVYDLNQGDDPLKLAQEYFSEHIEPRRLMLIGNKCDLTGQSAEISDYQGFRHITVSAKQEMGVQGLVDAITAHAGFHPEEDTFIARTRHLDAMKRTQLYLAEAREQLVIFNAGELVAESLRLAQNALGEITGDFSADDLLGKIFGSFCIGK</sequence>
<name>MNME_ACIBY</name>
<organism>
    <name type="scientific">Acinetobacter baumannii (strain AYE)</name>
    <dbReference type="NCBI Taxonomy" id="509173"/>
    <lineage>
        <taxon>Bacteria</taxon>
        <taxon>Pseudomonadati</taxon>
        <taxon>Pseudomonadota</taxon>
        <taxon>Gammaproteobacteria</taxon>
        <taxon>Moraxellales</taxon>
        <taxon>Moraxellaceae</taxon>
        <taxon>Acinetobacter</taxon>
        <taxon>Acinetobacter calcoaceticus/baumannii complex</taxon>
    </lineage>
</organism>
<feature type="chain" id="PRO_0000345698" description="tRNA modification GTPase MnmE">
    <location>
        <begin position="1"/>
        <end position="454"/>
    </location>
</feature>
<feature type="domain" description="TrmE-type G">
    <location>
        <begin position="219"/>
        <end position="378"/>
    </location>
</feature>
<feature type="binding site" evidence="1">
    <location>
        <position position="26"/>
    </location>
    <ligand>
        <name>(6S)-5-formyl-5,6,7,8-tetrahydrofolate</name>
        <dbReference type="ChEBI" id="CHEBI:57457"/>
    </ligand>
</feature>
<feature type="binding site" evidence="1">
    <location>
        <position position="84"/>
    </location>
    <ligand>
        <name>(6S)-5-formyl-5,6,7,8-tetrahydrofolate</name>
        <dbReference type="ChEBI" id="CHEBI:57457"/>
    </ligand>
</feature>
<feature type="binding site" evidence="1">
    <location>
        <position position="123"/>
    </location>
    <ligand>
        <name>(6S)-5-formyl-5,6,7,8-tetrahydrofolate</name>
        <dbReference type="ChEBI" id="CHEBI:57457"/>
    </ligand>
</feature>
<feature type="binding site" evidence="1">
    <location>
        <begin position="229"/>
        <end position="234"/>
    </location>
    <ligand>
        <name>GTP</name>
        <dbReference type="ChEBI" id="CHEBI:37565"/>
    </ligand>
</feature>
<feature type="binding site" evidence="1">
    <location>
        <position position="229"/>
    </location>
    <ligand>
        <name>K(+)</name>
        <dbReference type="ChEBI" id="CHEBI:29103"/>
    </ligand>
</feature>
<feature type="binding site" evidence="1">
    <location>
        <position position="233"/>
    </location>
    <ligand>
        <name>Mg(2+)</name>
        <dbReference type="ChEBI" id="CHEBI:18420"/>
    </ligand>
</feature>
<feature type="binding site" evidence="1">
    <location>
        <begin position="248"/>
        <end position="254"/>
    </location>
    <ligand>
        <name>GTP</name>
        <dbReference type="ChEBI" id="CHEBI:37565"/>
    </ligand>
</feature>
<feature type="binding site" evidence="1">
    <location>
        <position position="248"/>
    </location>
    <ligand>
        <name>K(+)</name>
        <dbReference type="ChEBI" id="CHEBI:29103"/>
    </ligand>
</feature>
<feature type="binding site" evidence="1">
    <location>
        <position position="250"/>
    </location>
    <ligand>
        <name>K(+)</name>
        <dbReference type="ChEBI" id="CHEBI:29103"/>
    </ligand>
</feature>
<feature type="binding site" evidence="1">
    <location>
        <position position="253"/>
    </location>
    <ligand>
        <name>K(+)</name>
        <dbReference type="ChEBI" id="CHEBI:29103"/>
    </ligand>
</feature>
<feature type="binding site" evidence="1">
    <location>
        <position position="254"/>
    </location>
    <ligand>
        <name>Mg(2+)</name>
        <dbReference type="ChEBI" id="CHEBI:18420"/>
    </ligand>
</feature>
<feature type="binding site" evidence="1">
    <location>
        <begin position="273"/>
        <end position="276"/>
    </location>
    <ligand>
        <name>GTP</name>
        <dbReference type="ChEBI" id="CHEBI:37565"/>
    </ligand>
</feature>
<feature type="binding site" evidence="1">
    <location>
        <position position="454"/>
    </location>
    <ligand>
        <name>(6S)-5-formyl-5,6,7,8-tetrahydrofolate</name>
        <dbReference type="ChEBI" id="CHEBI:57457"/>
    </ligand>
</feature>